<comment type="function">
    <text evidence="1">Folate-binding protein involved in regulating the level of ATP-DnaA and in the modification of some tRNAs. It is probably a key factor in regulatory networks that act via tRNA modification, such as initiation of chromosomal replication.</text>
</comment>
<comment type="subcellular location">
    <subcellularLocation>
        <location evidence="1">Cytoplasm</location>
    </subcellularLocation>
</comment>
<comment type="similarity">
    <text evidence="1">Belongs to the tRNA-modifying YgfZ family.</text>
</comment>
<feature type="chain" id="PRO_0000216253" description="tRNA-modifying protein YgfZ">
    <location>
        <begin position="1"/>
        <end position="319"/>
    </location>
</feature>
<feature type="binding site" evidence="1">
    <location>
        <position position="27"/>
    </location>
    <ligand>
        <name>folate</name>
        <dbReference type="ChEBI" id="CHEBI:62501"/>
    </ligand>
</feature>
<feature type="binding site" evidence="1">
    <location>
        <position position="189"/>
    </location>
    <ligand>
        <name>folate</name>
        <dbReference type="ChEBI" id="CHEBI:62501"/>
    </ligand>
</feature>
<accession>P57510</accession>
<gene>
    <name type="ordered locus">BU435</name>
</gene>
<organism>
    <name type="scientific">Buchnera aphidicola subsp. Acyrthosiphon pisum (strain APS)</name>
    <name type="common">Acyrthosiphon pisum symbiotic bacterium</name>
    <dbReference type="NCBI Taxonomy" id="107806"/>
    <lineage>
        <taxon>Bacteria</taxon>
        <taxon>Pseudomonadati</taxon>
        <taxon>Pseudomonadota</taxon>
        <taxon>Gammaproteobacteria</taxon>
        <taxon>Enterobacterales</taxon>
        <taxon>Erwiniaceae</taxon>
        <taxon>Buchnera</taxon>
    </lineage>
</organism>
<dbReference type="EMBL" id="BA000003">
    <property type="protein sequence ID" value="BAB13133.1"/>
    <property type="molecule type" value="Genomic_DNA"/>
</dbReference>
<dbReference type="RefSeq" id="NP_240247.1">
    <property type="nucleotide sequence ID" value="NC_002528.1"/>
</dbReference>
<dbReference type="SMR" id="P57510"/>
<dbReference type="STRING" id="563178.BUAP5A_428"/>
<dbReference type="EnsemblBacteria" id="BAB13133">
    <property type="protein sequence ID" value="BAB13133"/>
    <property type="gene ID" value="BAB13133"/>
</dbReference>
<dbReference type="KEGG" id="buc:BU435"/>
<dbReference type="PATRIC" id="fig|107806.10.peg.444"/>
<dbReference type="eggNOG" id="COG0354">
    <property type="taxonomic scope" value="Bacteria"/>
</dbReference>
<dbReference type="HOGENOM" id="CLU_007884_6_1_6"/>
<dbReference type="BioCyc" id="BAPH107806:GBZJ-428-MONOMER"/>
<dbReference type="Proteomes" id="UP000001806">
    <property type="component" value="Chromosome"/>
</dbReference>
<dbReference type="GO" id="GO:0005737">
    <property type="term" value="C:cytoplasm"/>
    <property type="evidence" value="ECO:0007669"/>
    <property type="project" value="UniProtKB-SubCell"/>
</dbReference>
<dbReference type="GO" id="GO:0005542">
    <property type="term" value="F:folic acid binding"/>
    <property type="evidence" value="ECO:0007669"/>
    <property type="project" value="UniProtKB-UniRule"/>
</dbReference>
<dbReference type="GO" id="GO:0016226">
    <property type="term" value="P:iron-sulfur cluster assembly"/>
    <property type="evidence" value="ECO:0007669"/>
    <property type="project" value="TreeGrafter"/>
</dbReference>
<dbReference type="GO" id="GO:0009451">
    <property type="term" value="P:RNA modification"/>
    <property type="evidence" value="ECO:0007669"/>
    <property type="project" value="InterPro"/>
</dbReference>
<dbReference type="GO" id="GO:0008033">
    <property type="term" value="P:tRNA processing"/>
    <property type="evidence" value="ECO:0007669"/>
    <property type="project" value="UniProtKB-UniRule"/>
</dbReference>
<dbReference type="Gene3D" id="2.40.30.160">
    <property type="match status" value="1"/>
</dbReference>
<dbReference type="Gene3D" id="3.30.70.1630">
    <property type="match status" value="1"/>
</dbReference>
<dbReference type="Gene3D" id="3.30.70.1400">
    <property type="entry name" value="Aminomethyltransferase beta-barrel domains"/>
    <property type="match status" value="1"/>
</dbReference>
<dbReference type="HAMAP" id="MF_01175">
    <property type="entry name" value="tRNA_modifying_YgfZ"/>
    <property type="match status" value="1"/>
</dbReference>
<dbReference type="InterPro" id="IPR029043">
    <property type="entry name" value="GcvT/YgfZ_C"/>
</dbReference>
<dbReference type="InterPro" id="IPR023758">
    <property type="entry name" value="tRNA-modifying_YgfZ"/>
</dbReference>
<dbReference type="InterPro" id="IPR045179">
    <property type="entry name" value="YgfZ/GcvT"/>
</dbReference>
<dbReference type="InterPro" id="IPR017703">
    <property type="entry name" value="YgfZ/GcvT_CS"/>
</dbReference>
<dbReference type="InterPro" id="IPR048451">
    <property type="entry name" value="YgfZ_barrel"/>
</dbReference>
<dbReference type="NCBIfam" id="NF007110">
    <property type="entry name" value="PRK09559.1"/>
    <property type="match status" value="1"/>
</dbReference>
<dbReference type="NCBIfam" id="TIGR03317">
    <property type="entry name" value="ygfZ_signature"/>
    <property type="match status" value="1"/>
</dbReference>
<dbReference type="PANTHER" id="PTHR22602">
    <property type="entry name" value="TRANSFERASE CAF17, MITOCHONDRIAL-RELATED"/>
    <property type="match status" value="1"/>
</dbReference>
<dbReference type="PANTHER" id="PTHR22602:SF0">
    <property type="entry name" value="TRANSFERASE CAF17, MITOCHONDRIAL-RELATED"/>
    <property type="match status" value="1"/>
</dbReference>
<dbReference type="Pfam" id="PF21130">
    <property type="entry name" value="YgfZ_barrel"/>
    <property type="match status" value="1"/>
</dbReference>
<dbReference type="SUPFAM" id="SSF101790">
    <property type="entry name" value="Aminomethyltransferase beta-barrel domain"/>
    <property type="match status" value="1"/>
</dbReference>
<dbReference type="SUPFAM" id="SSF103025">
    <property type="entry name" value="Folate-binding domain"/>
    <property type="match status" value="1"/>
</dbReference>
<reference key="1">
    <citation type="journal article" date="2000" name="Nature">
        <title>Genome sequence of the endocellular bacterial symbiont of aphids Buchnera sp. APS.</title>
        <authorList>
            <person name="Shigenobu S."/>
            <person name="Watanabe H."/>
            <person name="Hattori M."/>
            <person name="Sakaki Y."/>
            <person name="Ishikawa H."/>
        </authorList>
    </citation>
    <scope>NUCLEOTIDE SEQUENCE [LARGE SCALE GENOMIC DNA]</scope>
    <source>
        <strain>APS</strain>
    </source>
</reference>
<proteinExistence type="inferred from homology"/>
<evidence type="ECO:0000255" key="1">
    <source>
        <dbReference type="HAMAP-Rule" id="MF_01175"/>
    </source>
</evidence>
<protein>
    <recommendedName>
        <fullName evidence="1">tRNA-modifying protein YgfZ</fullName>
    </recommendedName>
</protein>
<keyword id="KW-0963">Cytoplasm</keyword>
<keyword id="KW-0290">Folate-binding</keyword>
<keyword id="KW-1185">Reference proteome</keyword>
<keyword id="KW-0819">tRNA processing</keyword>
<sequence>MPSFISIQNIIYPSNELSLTMILLEEWSLTYVEGIDSKKYLQGQLTIDINLLLKTHHTLCAHCNFNGRVWSTMHLFHYEKGYAYIQRKSVSQIQIKEICKYSIFSKIKIRELNSICLIGFAGCNVRSFLSSLFVKIPNQSCPVIHEDNKTILWYEKPSERFLLVLPFLDFLTLKRKINQNIFLNNSKQWLLLDIEAGLPVIDKICSNKFTPQAINLHNLKAISFKKGCYYGQETIARIFFKKTNKYFLCFLVSTGSIFPKIGSFIETKVDSEWFKVGVLLSIVHVKCEEIYIQVVLRKSVNINNLFRIHGFENIFLIKN</sequence>
<name>YGFZ_BUCAI</name>